<name>PLSY3_DEHMC</name>
<keyword id="KW-1003">Cell membrane</keyword>
<keyword id="KW-0444">Lipid biosynthesis</keyword>
<keyword id="KW-0443">Lipid metabolism</keyword>
<keyword id="KW-0472">Membrane</keyword>
<keyword id="KW-0594">Phospholipid biosynthesis</keyword>
<keyword id="KW-1208">Phospholipid metabolism</keyword>
<keyword id="KW-0808">Transferase</keyword>
<keyword id="KW-0812">Transmembrane</keyword>
<keyword id="KW-1133">Transmembrane helix</keyword>
<comment type="function">
    <text evidence="1">Catalyzes the transfer of an acyl group from acyl-phosphate (acyl-PO(4)) to glycerol-3-phosphate (G3P) to form lysophosphatidic acid (LPA). This enzyme utilizes acyl-phosphate as fatty acyl donor, but not acyl-CoA or acyl-ACP.</text>
</comment>
<comment type="catalytic activity">
    <reaction evidence="1">
        <text>an acyl phosphate + sn-glycerol 3-phosphate = a 1-acyl-sn-glycero-3-phosphate + phosphate</text>
        <dbReference type="Rhea" id="RHEA:34075"/>
        <dbReference type="ChEBI" id="CHEBI:43474"/>
        <dbReference type="ChEBI" id="CHEBI:57597"/>
        <dbReference type="ChEBI" id="CHEBI:57970"/>
        <dbReference type="ChEBI" id="CHEBI:59918"/>
        <dbReference type="EC" id="2.3.1.275"/>
    </reaction>
</comment>
<comment type="pathway">
    <text evidence="1">Lipid metabolism; phospholipid metabolism.</text>
</comment>
<comment type="subunit">
    <text evidence="1">Probably interacts with PlsX.</text>
</comment>
<comment type="subcellular location">
    <subcellularLocation>
        <location evidence="1">Cell membrane</location>
        <topology evidence="1">Multi-pass membrane protein</topology>
    </subcellularLocation>
</comment>
<comment type="similarity">
    <text evidence="1">Belongs to the PlsY family.</text>
</comment>
<protein>
    <recommendedName>
        <fullName evidence="1">Glycerol-3-phosphate acyltransferase 3</fullName>
    </recommendedName>
    <alternativeName>
        <fullName evidence="1">Acyl-PO4 G3P acyltransferase 3</fullName>
    </alternativeName>
    <alternativeName>
        <fullName evidence="1">Acyl-phosphate--glycerol-3-phosphate acyltransferase 3</fullName>
    </alternativeName>
    <alternativeName>
        <fullName evidence="1">G3P acyltransferase 3</fullName>
        <shortName evidence="1">GPAT 3</shortName>
        <ecNumber evidence="1">2.3.1.275</ecNumber>
    </alternativeName>
    <alternativeName>
        <fullName evidence="1">Lysophosphatidic acid synthase 3</fullName>
        <shortName evidence="1">LPA synthase 3</shortName>
    </alternativeName>
</protein>
<dbReference type="EC" id="2.3.1.275" evidence="1"/>
<dbReference type="EMBL" id="AJ965256">
    <property type="protein sequence ID" value="CAI83404.1"/>
    <property type="molecule type" value="Genomic_DNA"/>
</dbReference>
<dbReference type="SMR" id="Q3ZYV4"/>
<dbReference type="KEGG" id="deh:cbdbA1355"/>
<dbReference type="HOGENOM" id="CLU_081254_7_1_0"/>
<dbReference type="UniPathway" id="UPA00085"/>
<dbReference type="Proteomes" id="UP000000433">
    <property type="component" value="Chromosome"/>
</dbReference>
<dbReference type="GO" id="GO:0005886">
    <property type="term" value="C:plasma membrane"/>
    <property type="evidence" value="ECO:0007669"/>
    <property type="project" value="UniProtKB-SubCell"/>
</dbReference>
<dbReference type="GO" id="GO:0043772">
    <property type="term" value="F:acyl-phosphate glycerol-3-phosphate acyltransferase activity"/>
    <property type="evidence" value="ECO:0007669"/>
    <property type="project" value="UniProtKB-UniRule"/>
</dbReference>
<dbReference type="GO" id="GO:0008654">
    <property type="term" value="P:phospholipid biosynthetic process"/>
    <property type="evidence" value="ECO:0007669"/>
    <property type="project" value="UniProtKB-UniRule"/>
</dbReference>
<dbReference type="HAMAP" id="MF_01043">
    <property type="entry name" value="PlsY"/>
    <property type="match status" value="1"/>
</dbReference>
<dbReference type="InterPro" id="IPR003811">
    <property type="entry name" value="G3P_acylTferase_PlsY"/>
</dbReference>
<dbReference type="NCBIfam" id="TIGR00023">
    <property type="entry name" value="glycerol-3-phosphate 1-O-acyltransferase PlsY"/>
    <property type="match status" value="1"/>
</dbReference>
<dbReference type="PANTHER" id="PTHR30309:SF0">
    <property type="entry name" value="GLYCEROL-3-PHOSPHATE ACYLTRANSFERASE-RELATED"/>
    <property type="match status" value="1"/>
</dbReference>
<dbReference type="PANTHER" id="PTHR30309">
    <property type="entry name" value="INNER MEMBRANE PROTEIN YGIH"/>
    <property type="match status" value="1"/>
</dbReference>
<dbReference type="Pfam" id="PF02660">
    <property type="entry name" value="G3P_acyltransf"/>
    <property type="match status" value="1"/>
</dbReference>
<dbReference type="SMART" id="SM01207">
    <property type="entry name" value="G3P_acyltransf"/>
    <property type="match status" value="1"/>
</dbReference>
<gene>
    <name evidence="1" type="primary">plsY3</name>
    <name type="ordered locus">cbdbA1355</name>
</gene>
<accession>Q3ZYV4</accession>
<sequence length="216" mass="22407">MLIAKLLLVVIVSYILGSIPFGYLVSHRGSKIDIRSFGSGRTGATNVLRTMGRKAALLVASLDVIKGASAVAFAGLVIGTEALAFGTNGMALLFAQVLAGLAAVAGHIWPVFLKFRGGRGVATFFGGMIALCPVAAIFGGEVLIIGAGLSGFASLGSITGVVGAYALLVPLTLISGFPTEYMIYAVIGSLLITIMHRDNIKRLLAGKERKLNEKAR</sequence>
<organism>
    <name type="scientific">Dehalococcoides mccartyi (strain CBDB1)</name>
    <dbReference type="NCBI Taxonomy" id="255470"/>
    <lineage>
        <taxon>Bacteria</taxon>
        <taxon>Bacillati</taxon>
        <taxon>Chloroflexota</taxon>
        <taxon>Dehalococcoidia</taxon>
        <taxon>Dehalococcoidales</taxon>
        <taxon>Dehalococcoidaceae</taxon>
        <taxon>Dehalococcoides</taxon>
    </lineage>
</organism>
<evidence type="ECO:0000255" key="1">
    <source>
        <dbReference type="HAMAP-Rule" id="MF_01043"/>
    </source>
</evidence>
<proteinExistence type="inferred from homology"/>
<feature type="chain" id="PRO_0000188356" description="Glycerol-3-phosphate acyltransferase 3">
    <location>
        <begin position="1"/>
        <end position="216"/>
    </location>
</feature>
<feature type="transmembrane region" description="Helical" evidence="1">
    <location>
        <begin position="6"/>
        <end position="26"/>
    </location>
</feature>
<feature type="transmembrane region" description="Helical" evidence="1">
    <location>
        <begin position="58"/>
        <end position="78"/>
    </location>
</feature>
<feature type="transmembrane region" description="Helical" evidence="1">
    <location>
        <begin position="92"/>
        <end position="112"/>
    </location>
</feature>
<feature type="transmembrane region" description="Helical" evidence="1">
    <location>
        <begin position="125"/>
        <end position="145"/>
    </location>
</feature>
<feature type="transmembrane region" description="Helical" evidence="1">
    <location>
        <begin position="158"/>
        <end position="178"/>
    </location>
</feature>
<reference key="1">
    <citation type="journal article" date="2005" name="Nat. Biotechnol.">
        <title>Genome sequence of the chlorinated compound-respiring bacterium Dehalococcoides species strain CBDB1.</title>
        <authorList>
            <person name="Kube M."/>
            <person name="Beck A."/>
            <person name="Zinder S.H."/>
            <person name="Kuhl H."/>
            <person name="Reinhardt R."/>
            <person name="Adrian L."/>
        </authorList>
    </citation>
    <scope>NUCLEOTIDE SEQUENCE [LARGE SCALE GENOMIC DNA]</scope>
    <source>
        <strain>CBDB1</strain>
    </source>
</reference>